<gene>
    <name evidence="1" type="primary">sfsA</name>
    <name type="ordered locus">Cagg_0712</name>
</gene>
<comment type="similarity">
    <text evidence="1">Belongs to the SfsA family.</text>
</comment>
<proteinExistence type="inferred from homology"/>
<evidence type="ECO:0000255" key="1">
    <source>
        <dbReference type="HAMAP-Rule" id="MF_00095"/>
    </source>
</evidence>
<sequence>MNTGHGTGQQIHPIVRVPFSAGVPLIEATFAARSGQFLVEAQMGGRMVRAHVADRGRLVDLLVPGARLLLAPREEVGRKTAFQVVAVYQDSDLVSLDTQLPNRLVAAALSLRALPQFARYGTVQREVQLGPHRIDFRLSEGLDTCLLEVKSVTRVIDGVAVFPDAPTERGSQHLELLTNAARNGQRAAVVFIIQRSQGVAFAPDETIDRAFSRALRTARALGVEIYAYLCPVTPTGITLGHEVPVFMSLSAVPSELRRRL</sequence>
<protein>
    <recommendedName>
        <fullName evidence="1">Sugar fermentation stimulation protein homolog</fullName>
    </recommendedName>
</protein>
<organism>
    <name type="scientific">Chloroflexus aggregans (strain MD-66 / DSM 9485)</name>
    <dbReference type="NCBI Taxonomy" id="326427"/>
    <lineage>
        <taxon>Bacteria</taxon>
        <taxon>Bacillati</taxon>
        <taxon>Chloroflexota</taxon>
        <taxon>Chloroflexia</taxon>
        <taxon>Chloroflexales</taxon>
        <taxon>Chloroflexineae</taxon>
        <taxon>Chloroflexaceae</taxon>
        <taxon>Chloroflexus</taxon>
    </lineage>
</organism>
<reference key="1">
    <citation type="submission" date="2008-12" db="EMBL/GenBank/DDBJ databases">
        <title>Complete sequence of Chloroflexus aggregans DSM 9485.</title>
        <authorList>
            <consortium name="US DOE Joint Genome Institute"/>
            <person name="Lucas S."/>
            <person name="Copeland A."/>
            <person name="Lapidus A."/>
            <person name="Glavina del Rio T."/>
            <person name="Dalin E."/>
            <person name="Tice H."/>
            <person name="Pitluck S."/>
            <person name="Foster B."/>
            <person name="Larimer F."/>
            <person name="Land M."/>
            <person name="Hauser L."/>
            <person name="Kyrpides N."/>
            <person name="Mikhailova N."/>
            <person name="Bryant D.A."/>
            <person name="Richardson P."/>
        </authorList>
    </citation>
    <scope>NUCLEOTIDE SEQUENCE [LARGE SCALE GENOMIC DNA]</scope>
    <source>
        <strain>MD-66 / DSM 9485</strain>
    </source>
</reference>
<name>SFSA_CHLAD</name>
<accession>B8G503</accession>
<dbReference type="EMBL" id="CP001337">
    <property type="protein sequence ID" value="ACL23636.1"/>
    <property type="molecule type" value="Genomic_DNA"/>
</dbReference>
<dbReference type="RefSeq" id="WP_012616002.1">
    <property type="nucleotide sequence ID" value="NC_011831.1"/>
</dbReference>
<dbReference type="SMR" id="B8G503"/>
<dbReference type="STRING" id="326427.Cagg_0712"/>
<dbReference type="KEGG" id="cag:Cagg_0712"/>
<dbReference type="eggNOG" id="COG1489">
    <property type="taxonomic scope" value="Bacteria"/>
</dbReference>
<dbReference type="HOGENOM" id="CLU_052299_1_0_0"/>
<dbReference type="OrthoDB" id="9802365at2"/>
<dbReference type="Proteomes" id="UP000002508">
    <property type="component" value="Chromosome"/>
</dbReference>
<dbReference type="GO" id="GO:0003677">
    <property type="term" value="F:DNA binding"/>
    <property type="evidence" value="ECO:0007669"/>
    <property type="project" value="InterPro"/>
</dbReference>
<dbReference type="CDD" id="cd22359">
    <property type="entry name" value="SfsA-like_bacterial"/>
    <property type="match status" value="1"/>
</dbReference>
<dbReference type="Gene3D" id="2.40.50.580">
    <property type="match status" value="1"/>
</dbReference>
<dbReference type="Gene3D" id="3.40.1350.60">
    <property type="match status" value="1"/>
</dbReference>
<dbReference type="HAMAP" id="MF_00095">
    <property type="entry name" value="SfsA"/>
    <property type="match status" value="1"/>
</dbReference>
<dbReference type="InterPro" id="IPR005224">
    <property type="entry name" value="SfsA"/>
</dbReference>
<dbReference type="InterPro" id="IPR040452">
    <property type="entry name" value="SfsA_C"/>
</dbReference>
<dbReference type="InterPro" id="IPR041465">
    <property type="entry name" value="SfsA_N"/>
</dbReference>
<dbReference type="NCBIfam" id="TIGR00230">
    <property type="entry name" value="sfsA"/>
    <property type="match status" value="1"/>
</dbReference>
<dbReference type="PANTHER" id="PTHR30545">
    <property type="entry name" value="SUGAR FERMENTATION STIMULATION PROTEIN A"/>
    <property type="match status" value="1"/>
</dbReference>
<dbReference type="PANTHER" id="PTHR30545:SF2">
    <property type="entry name" value="SUGAR FERMENTATION STIMULATION PROTEIN A"/>
    <property type="match status" value="1"/>
</dbReference>
<dbReference type="Pfam" id="PF03749">
    <property type="entry name" value="SfsA"/>
    <property type="match status" value="1"/>
</dbReference>
<dbReference type="Pfam" id="PF17746">
    <property type="entry name" value="SfsA_N"/>
    <property type="match status" value="1"/>
</dbReference>
<feature type="chain" id="PRO_1000196961" description="Sugar fermentation stimulation protein homolog">
    <location>
        <begin position="1"/>
        <end position="260"/>
    </location>
</feature>